<proteinExistence type="inferred from homology"/>
<evidence type="ECO:0000255" key="1">
    <source>
        <dbReference type="HAMAP-Rule" id="MF_00238"/>
    </source>
</evidence>
<organism>
    <name type="scientific">Streptococcus agalactiae serotype V (strain ATCC BAA-611 / 2603 V/R)</name>
    <dbReference type="NCBI Taxonomy" id="208435"/>
    <lineage>
        <taxon>Bacteria</taxon>
        <taxon>Bacillati</taxon>
        <taxon>Bacillota</taxon>
        <taxon>Bacilli</taxon>
        <taxon>Lactobacillales</taxon>
        <taxon>Streptococcaceae</taxon>
        <taxon>Streptococcus</taxon>
    </lineage>
</organism>
<accession>Q8DYT8</accession>
<feature type="chain" id="PRO_0000131981" description="Cytidylate kinase">
    <location>
        <begin position="1"/>
        <end position="227"/>
    </location>
</feature>
<feature type="binding site" evidence="1">
    <location>
        <begin position="10"/>
        <end position="18"/>
    </location>
    <ligand>
        <name>ATP</name>
        <dbReference type="ChEBI" id="CHEBI:30616"/>
    </ligand>
</feature>
<name>KCY_STRA5</name>
<gene>
    <name evidence="1" type="primary">cmk</name>
    <name type="ordered locus">SAG1385</name>
</gene>
<comment type="catalytic activity">
    <reaction evidence="1">
        <text>CMP + ATP = CDP + ADP</text>
        <dbReference type="Rhea" id="RHEA:11600"/>
        <dbReference type="ChEBI" id="CHEBI:30616"/>
        <dbReference type="ChEBI" id="CHEBI:58069"/>
        <dbReference type="ChEBI" id="CHEBI:60377"/>
        <dbReference type="ChEBI" id="CHEBI:456216"/>
        <dbReference type="EC" id="2.7.4.25"/>
    </reaction>
</comment>
<comment type="catalytic activity">
    <reaction evidence="1">
        <text>dCMP + ATP = dCDP + ADP</text>
        <dbReference type="Rhea" id="RHEA:25094"/>
        <dbReference type="ChEBI" id="CHEBI:30616"/>
        <dbReference type="ChEBI" id="CHEBI:57566"/>
        <dbReference type="ChEBI" id="CHEBI:58593"/>
        <dbReference type="ChEBI" id="CHEBI:456216"/>
        <dbReference type="EC" id="2.7.4.25"/>
    </reaction>
</comment>
<comment type="subcellular location">
    <subcellularLocation>
        <location evidence="1">Cytoplasm</location>
    </subcellularLocation>
</comment>
<comment type="similarity">
    <text evidence="1">Belongs to the cytidylate kinase family. Type 1 subfamily.</text>
</comment>
<protein>
    <recommendedName>
        <fullName evidence="1">Cytidylate kinase</fullName>
        <shortName evidence="1">CK</shortName>
        <ecNumber evidence="1">2.7.4.25</ecNumber>
    </recommendedName>
    <alternativeName>
        <fullName evidence="1">Cytidine monophosphate kinase</fullName>
        <shortName evidence="1">CMP kinase</shortName>
    </alternativeName>
</protein>
<dbReference type="EC" id="2.7.4.25" evidence="1"/>
<dbReference type="EMBL" id="AE009948">
    <property type="protein sequence ID" value="AAN00256.1"/>
    <property type="molecule type" value="Genomic_DNA"/>
</dbReference>
<dbReference type="RefSeq" id="NP_688383.1">
    <property type="nucleotide sequence ID" value="NC_004116.1"/>
</dbReference>
<dbReference type="RefSeq" id="WP_001084720.1">
    <property type="nucleotide sequence ID" value="NC_004116.1"/>
</dbReference>
<dbReference type="SMR" id="Q8DYT8"/>
<dbReference type="STRING" id="208435.SAG1385"/>
<dbReference type="GeneID" id="66886261"/>
<dbReference type="KEGG" id="sag:SAG1385"/>
<dbReference type="PATRIC" id="fig|208435.3.peg.1393"/>
<dbReference type="HOGENOM" id="CLU_079959_0_2_9"/>
<dbReference type="OrthoDB" id="9807434at2"/>
<dbReference type="Proteomes" id="UP000000821">
    <property type="component" value="Chromosome"/>
</dbReference>
<dbReference type="GO" id="GO:0005829">
    <property type="term" value="C:cytosol"/>
    <property type="evidence" value="ECO:0007669"/>
    <property type="project" value="TreeGrafter"/>
</dbReference>
<dbReference type="GO" id="GO:0005524">
    <property type="term" value="F:ATP binding"/>
    <property type="evidence" value="ECO:0007669"/>
    <property type="project" value="UniProtKB-UniRule"/>
</dbReference>
<dbReference type="GO" id="GO:0036430">
    <property type="term" value="F:CMP kinase activity"/>
    <property type="evidence" value="ECO:0007669"/>
    <property type="project" value="RHEA"/>
</dbReference>
<dbReference type="GO" id="GO:0036431">
    <property type="term" value="F:dCMP kinase activity"/>
    <property type="evidence" value="ECO:0007669"/>
    <property type="project" value="RHEA"/>
</dbReference>
<dbReference type="GO" id="GO:0015949">
    <property type="term" value="P:nucleobase-containing small molecule interconversion"/>
    <property type="evidence" value="ECO:0007669"/>
    <property type="project" value="TreeGrafter"/>
</dbReference>
<dbReference type="GO" id="GO:0006220">
    <property type="term" value="P:pyrimidine nucleotide metabolic process"/>
    <property type="evidence" value="ECO:0007669"/>
    <property type="project" value="UniProtKB-UniRule"/>
</dbReference>
<dbReference type="CDD" id="cd02020">
    <property type="entry name" value="CMPK"/>
    <property type="match status" value="1"/>
</dbReference>
<dbReference type="FunFam" id="3.40.50.300:FF:000484">
    <property type="entry name" value="Cytidylate kinase"/>
    <property type="match status" value="1"/>
</dbReference>
<dbReference type="Gene3D" id="3.40.50.300">
    <property type="entry name" value="P-loop containing nucleotide triphosphate hydrolases"/>
    <property type="match status" value="1"/>
</dbReference>
<dbReference type="HAMAP" id="MF_00238">
    <property type="entry name" value="Cytidyl_kinase_type1"/>
    <property type="match status" value="1"/>
</dbReference>
<dbReference type="InterPro" id="IPR003136">
    <property type="entry name" value="Cytidylate_kin"/>
</dbReference>
<dbReference type="InterPro" id="IPR011994">
    <property type="entry name" value="Cytidylate_kinase_dom"/>
</dbReference>
<dbReference type="InterPro" id="IPR027417">
    <property type="entry name" value="P-loop_NTPase"/>
</dbReference>
<dbReference type="NCBIfam" id="TIGR00017">
    <property type="entry name" value="cmk"/>
    <property type="match status" value="1"/>
</dbReference>
<dbReference type="PANTHER" id="PTHR21299:SF2">
    <property type="entry name" value="CYTIDYLATE KINASE"/>
    <property type="match status" value="1"/>
</dbReference>
<dbReference type="PANTHER" id="PTHR21299">
    <property type="entry name" value="CYTIDYLATE KINASE/PANTOATE-BETA-ALANINE LIGASE"/>
    <property type="match status" value="1"/>
</dbReference>
<dbReference type="Pfam" id="PF02224">
    <property type="entry name" value="Cytidylate_kin"/>
    <property type="match status" value="1"/>
</dbReference>
<dbReference type="SUPFAM" id="SSF52540">
    <property type="entry name" value="P-loop containing nucleoside triphosphate hydrolases"/>
    <property type="match status" value="1"/>
</dbReference>
<sequence>MNSINIAIDGPASSGKSTVAKIIAKNLNYTYLDTGAMYRCATYLALQHGYEAQDVSKILGLLAERPISFGKAEDGSQTVFLGTEEVTLAIRQNDVTNNVSWVSAIPEIREELVNQQRRIAKDGAIIMDGRDIGTVVLPDAELKIFLVASVDERAERRFKENQEKGIESDFETLKSEIAARDYKDSHREVSPLKAAEDAIEFDTTGVSIEGVVTFIQEKAEKIIDMKN</sequence>
<keyword id="KW-0067">ATP-binding</keyword>
<keyword id="KW-0963">Cytoplasm</keyword>
<keyword id="KW-0418">Kinase</keyword>
<keyword id="KW-0547">Nucleotide-binding</keyword>
<keyword id="KW-1185">Reference proteome</keyword>
<keyword id="KW-0808">Transferase</keyword>
<reference key="1">
    <citation type="journal article" date="2002" name="Proc. Natl. Acad. Sci. U.S.A.">
        <title>Complete genome sequence and comparative genomic analysis of an emerging human pathogen, serotype V Streptococcus agalactiae.</title>
        <authorList>
            <person name="Tettelin H."/>
            <person name="Masignani V."/>
            <person name="Cieslewicz M.J."/>
            <person name="Eisen J.A."/>
            <person name="Peterson S.N."/>
            <person name="Wessels M.R."/>
            <person name="Paulsen I.T."/>
            <person name="Nelson K.E."/>
            <person name="Margarit I."/>
            <person name="Read T.D."/>
            <person name="Madoff L.C."/>
            <person name="Wolf A.M."/>
            <person name="Beanan M.J."/>
            <person name="Brinkac L.M."/>
            <person name="Daugherty S.C."/>
            <person name="DeBoy R.T."/>
            <person name="Durkin A.S."/>
            <person name="Kolonay J.F."/>
            <person name="Madupu R."/>
            <person name="Lewis M.R."/>
            <person name="Radune D."/>
            <person name="Fedorova N.B."/>
            <person name="Scanlan D."/>
            <person name="Khouri H.M."/>
            <person name="Mulligan S."/>
            <person name="Carty H.A."/>
            <person name="Cline R.T."/>
            <person name="Van Aken S.E."/>
            <person name="Gill J."/>
            <person name="Scarselli M."/>
            <person name="Mora M."/>
            <person name="Iacobini E.T."/>
            <person name="Brettoni C."/>
            <person name="Galli G."/>
            <person name="Mariani M."/>
            <person name="Vegni F."/>
            <person name="Maione D."/>
            <person name="Rinaudo D."/>
            <person name="Rappuoli R."/>
            <person name="Telford J.L."/>
            <person name="Kasper D.L."/>
            <person name="Grandi G."/>
            <person name="Fraser C.M."/>
        </authorList>
    </citation>
    <scope>NUCLEOTIDE SEQUENCE [LARGE SCALE GENOMIC DNA]</scope>
    <source>
        <strain>ATCC BAA-611 / 2603 V/R</strain>
    </source>
</reference>